<proteinExistence type="inferred from homology"/>
<reference key="1">
    <citation type="submission" date="2009-04" db="EMBL/GenBank/DDBJ databases">
        <title>Genome sequence of Bacillus anthracis A0248.</title>
        <authorList>
            <person name="Dodson R.J."/>
            <person name="Munk A.C."/>
            <person name="Bruce D."/>
            <person name="Detter C."/>
            <person name="Tapia R."/>
            <person name="Sutton G."/>
            <person name="Sims D."/>
            <person name="Brettin T."/>
        </authorList>
    </citation>
    <scope>NUCLEOTIDE SEQUENCE [LARGE SCALE GENOMIC DNA]</scope>
    <source>
        <strain>A0248</strain>
    </source>
</reference>
<comment type="similarity">
    <text evidence="1">Belongs to the UPF0346 family.</text>
</comment>
<accession>C3P914</accession>
<evidence type="ECO:0000255" key="1">
    <source>
        <dbReference type="HAMAP-Rule" id="MF_01538"/>
    </source>
</evidence>
<sequence>MKKTFYHYMMKHRAALFSNEISNLAEAMYDDLSFPKQSEDYDEISSYLELSGMLESMSIFDEAWDLYIQDR</sequence>
<protein>
    <recommendedName>
        <fullName evidence="1">UPF0346 protein BAA_2366</fullName>
    </recommendedName>
</protein>
<name>Y2366_BACAA</name>
<dbReference type="EMBL" id="CP001598">
    <property type="protein sequence ID" value="ACQ50721.1"/>
    <property type="molecule type" value="Genomic_DNA"/>
</dbReference>
<dbReference type="RefSeq" id="WP_000750724.1">
    <property type="nucleotide sequence ID" value="NC_012659.1"/>
</dbReference>
<dbReference type="SMR" id="C3P914"/>
<dbReference type="KEGG" id="bai:BAA_2366"/>
<dbReference type="HOGENOM" id="CLU_177534_0_0_9"/>
<dbReference type="Gene3D" id="1.10.150.260">
    <property type="entry name" value="YozE SAM-like"/>
    <property type="match status" value="1"/>
</dbReference>
<dbReference type="HAMAP" id="MF_01538">
    <property type="entry name" value="UPF0346"/>
    <property type="match status" value="1"/>
</dbReference>
<dbReference type="InterPro" id="IPR010673">
    <property type="entry name" value="UPF0346"/>
</dbReference>
<dbReference type="InterPro" id="IPR023089">
    <property type="entry name" value="YozE_SAM-like"/>
</dbReference>
<dbReference type="InterPro" id="IPR036806">
    <property type="entry name" value="YozE_SAM-like_sf"/>
</dbReference>
<dbReference type="NCBIfam" id="NF010193">
    <property type="entry name" value="PRK13672.1"/>
    <property type="match status" value="1"/>
</dbReference>
<dbReference type="Pfam" id="PF06855">
    <property type="entry name" value="YozE_SAM_like"/>
    <property type="match status" value="1"/>
</dbReference>
<dbReference type="PIRSF" id="PIRSF037262">
    <property type="entry name" value="UCP037262"/>
    <property type="match status" value="1"/>
</dbReference>
<dbReference type="SUPFAM" id="SSF140652">
    <property type="entry name" value="YozE-like"/>
    <property type="match status" value="1"/>
</dbReference>
<gene>
    <name type="ordered locus">BAA_2366</name>
</gene>
<organism>
    <name type="scientific">Bacillus anthracis (strain A0248)</name>
    <dbReference type="NCBI Taxonomy" id="592021"/>
    <lineage>
        <taxon>Bacteria</taxon>
        <taxon>Bacillati</taxon>
        <taxon>Bacillota</taxon>
        <taxon>Bacilli</taxon>
        <taxon>Bacillales</taxon>
        <taxon>Bacillaceae</taxon>
        <taxon>Bacillus</taxon>
        <taxon>Bacillus cereus group</taxon>
    </lineage>
</organism>
<feature type="chain" id="PRO_1000185202" description="UPF0346 protein BAA_2366">
    <location>
        <begin position="1"/>
        <end position="71"/>
    </location>
</feature>